<gene>
    <name evidence="1" type="primary">thrL</name>
    <name type="ordered locus">STY0001</name>
    <name type="ordered locus">t0001</name>
</gene>
<reference key="1">
    <citation type="journal article" date="2001" name="Nature">
        <title>Complete genome sequence of a multiple drug resistant Salmonella enterica serovar Typhi CT18.</title>
        <authorList>
            <person name="Parkhill J."/>
            <person name="Dougan G."/>
            <person name="James K.D."/>
            <person name="Thomson N.R."/>
            <person name="Pickard D."/>
            <person name="Wain J."/>
            <person name="Churcher C.M."/>
            <person name="Mungall K.L."/>
            <person name="Bentley S.D."/>
            <person name="Holden M.T.G."/>
            <person name="Sebaihia M."/>
            <person name="Baker S."/>
            <person name="Basham D."/>
            <person name="Brooks K."/>
            <person name="Chillingworth T."/>
            <person name="Connerton P."/>
            <person name="Cronin A."/>
            <person name="Davis P."/>
            <person name="Davies R.M."/>
            <person name="Dowd L."/>
            <person name="White N."/>
            <person name="Farrar J."/>
            <person name="Feltwell T."/>
            <person name="Hamlin N."/>
            <person name="Haque A."/>
            <person name="Hien T.T."/>
            <person name="Holroyd S."/>
            <person name="Jagels K."/>
            <person name="Krogh A."/>
            <person name="Larsen T.S."/>
            <person name="Leather S."/>
            <person name="Moule S."/>
            <person name="O'Gaora P."/>
            <person name="Parry C."/>
            <person name="Quail M.A."/>
            <person name="Rutherford K.M."/>
            <person name="Simmonds M."/>
            <person name="Skelton J."/>
            <person name="Stevens K."/>
            <person name="Whitehead S."/>
            <person name="Barrell B.G."/>
        </authorList>
    </citation>
    <scope>NUCLEOTIDE SEQUENCE [LARGE SCALE GENOMIC DNA]</scope>
    <source>
        <strain>CT18</strain>
    </source>
</reference>
<reference key="2">
    <citation type="journal article" date="2003" name="J. Bacteriol.">
        <title>Comparative genomics of Salmonella enterica serovar Typhi strains Ty2 and CT18.</title>
        <authorList>
            <person name="Deng W."/>
            <person name="Liou S.-R."/>
            <person name="Plunkett G. III"/>
            <person name="Mayhew G.F."/>
            <person name="Rose D.J."/>
            <person name="Burland V."/>
            <person name="Kodoyianni V."/>
            <person name="Schwartz D.C."/>
            <person name="Blattner F.R."/>
        </authorList>
    </citation>
    <scope>NUCLEOTIDE SEQUENCE [LARGE SCALE GENOMIC DNA]</scope>
    <source>
        <strain>ATCC 700931 / Ty2</strain>
    </source>
</reference>
<name>LPT_SALTI</name>
<accession>Q8XG12</accession>
<accession>Q7ANM9</accession>
<protein>
    <recommendedName>
        <fullName evidence="1">thr operon leader peptide</fullName>
    </recommendedName>
    <alternativeName>
        <fullName evidence="1">thr operon attenuator</fullName>
    </alternativeName>
</protein>
<feature type="peptide" id="PRO_0000312890" description="thr operon leader peptide">
    <location>
        <begin position="1"/>
        <end position="21"/>
    </location>
</feature>
<proteinExistence type="inferred from homology"/>
<evidence type="ECO:0000255" key="1">
    <source>
        <dbReference type="HAMAP-Rule" id="MF_01907"/>
    </source>
</evidence>
<keyword id="KW-0028">Amino-acid biosynthesis</keyword>
<keyword id="KW-0428">Leader peptide</keyword>
<keyword id="KW-0791">Threonine biosynthesis</keyword>
<organism>
    <name type="scientific">Salmonella typhi</name>
    <dbReference type="NCBI Taxonomy" id="90370"/>
    <lineage>
        <taxon>Bacteria</taxon>
        <taxon>Pseudomonadati</taxon>
        <taxon>Pseudomonadota</taxon>
        <taxon>Gammaproteobacteria</taxon>
        <taxon>Enterobacterales</taxon>
        <taxon>Enterobacteriaceae</taxon>
        <taxon>Salmonella</taxon>
    </lineage>
</organism>
<comment type="function">
    <text evidence="1">This protein is involved in control of the biosynthesis of threonine.</text>
</comment>
<comment type="similarity">
    <text evidence="1">Belongs to the thr operon leader peptide family.</text>
</comment>
<sequence>MNRISTTTITTITITTGNGAG</sequence>
<dbReference type="EMBL" id="AL513382">
    <property type="protein sequence ID" value="CAD01154.1"/>
    <property type="molecule type" value="Genomic_DNA"/>
</dbReference>
<dbReference type="EMBL" id="AE014613">
    <property type="protein sequence ID" value="AAO67735.1"/>
    <property type="molecule type" value="Genomic_DNA"/>
</dbReference>
<dbReference type="RefSeq" id="NP_454611.1">
    <property type="nucleotide sequence ID" value="NC_003198.1"/>
</dbReference>
<dbReference type="RefSeq" id="WP_001575544.1">
    <property type="nucleotide sequence ID" value="NZ_WSUR01000014.1"/>
</dbReference>
<dbReference type="STRING" id="220341.gene:17584056"/>
<dbReference type="KEGG" id="stt:t0001"/>
<dbReference type="KEGG" id="sty:STY0001"/>
<dbReference type="HOGENOM" id="CLU_221491_0_1_6"/>
<dbReference type="Proteomes" id="UP000000541">
    <property type="component" value="Chromosome"/>
</dbReference>
<dbReference type="Proteomes" id="UP000002670">
    <property type="component" value="Chromosome"/>
</dbReference>
<dbReference type="GO" id="GO:0009088">
    <property type="term" value="P:threonine biosynthetic process"/>
    <property type="evidence" value="ECO:0007669"/>
    <property type="project" value="UniProtKB-UniRule"/>
</dbReference>
<dbReference type="GO" id="GO:0031556">
    <property type="term" value="P:transcriptional attenuation by ribosome"/>
    <property type="evidence" value="ECO:0007669"/>
    <property type="project" value="UniProtKB-UniRule"/>
</dbReference>
<dbReference type="HAMAP" id="MF_01907">
    <property type="entry name" value="Leader_Thr"/>
    <property type="match status" value="1"/>
</dbReference>
<dbReference type="InterPro" id="IPR011720">
    <property type="entry name" value="Thr_lead_pept"/>
</dbReference>
<dbReference type="NCBIfam" id="NF007329">
    <property type="entry name" value="PRK09816.1"/>
    <property type="match status" value="1"/>
</dbReference>
<dbReference type="NCBIfam" id="TIGR02077">
    <property type="entry name" value="thr_lead_pep"/>
    <property type="match status" value="1"/>
</dbReference>
<dbReference type="Pfam" id="PF08254">
    <property type="entry name" value="Leader_Thr"/>
    <property type="match status" value="1"/>
</dbReference>